<reference key="1">
    <citation type="journal article" date="2009" name="Genome Biol.">
        <title>Genomic and genetic analyses of diversity and plant interactions of Pseudomonas fluorescens.</title>
        <authorList>
            <person name="Silby M.W."/>
            <person name="Cerdeno-Tarraga A.M."/>
            <person name="Vernikos G.S."/>
            <person name="Giddens S.R."/>
            <person name="Jackson R.W."/>
            <person name="Preston G.M."/>
            <person name="Zhang X.-X."/>
            <person name="Moon C.D."/>
            <person name="Gehrig S.M."/>
            <person name="Godfrey S.A.C."/>
            <person name="Knight C.G."/>
            <person name="Malone J.G."/>
            <person name="Robinson Z."/>
            <person name="Spiers A.J."/>
            <person name="Harris S."/>
            <person name="Challis G.L."/>
            <person name="Yaxley A.M."/>
            <person name="Harris D."/>
            <person name="Seeger K."/>
            <person name="Murphy L."/>
            <person name="Rutter S."/>
            <person name="Squares R."/>
            <person name="Quail M.A."/>
            <person name="Saunders E."/>
            <person name="Mavromatis K."/>
            <person name="Brettin T.S."/>
            <person name="Bentley S.D."/>
            <person name="Hothersall J."/>
            <person name="Stephens E."/>
            <person name="Thomas C.M."/>
            <person name="Parkhill J."/>
            <person name="Levy S.B."/>
            <person name="Rainey P.B."/>
            <person name="Thomson N.R."/>
        </authorList>
    </citation>
    <scope>NUCLEOTIDE SEQUENCE [LARGE SCALE GENOMIC DNA]</scope>
    <source>
        <strain>Pf0-1</strain>
    </source>
</reference>
<feature type="chain" id="PRO_0000380022" description="Undecaprenyl phosphate-alpha-4-amino-4-deoxy-L-arabinose arabinosyl transferase 2">
    <location>
        <begin position="1"/>
        <end position="549"/>
    </location>
</feature>
<feature type="transmembrane region" description="Helical" evidence="1">
    <location>
        <begin position="9"/>
        <end position="29"/>
    </location>
</feature>
<feature type="transmembrane region" description="Helical" evidence="1">
    <location>
        <begin position="80"/>
        <end position="102"/>
    </location>
</feature>
<feature type="transmembrane region" description="Helical" evidence="1">
    <location>
        <begin position="112"/>
        <end position="132"/>
    </location>
</feature>
<feature type="transmembrane region" description="Helical" evidence="1">
    <location>
        <begin position="133"/>
        <end position="153"/>
    </location>
</feature>
<feature type="transmembrane region" description="Helical" evidence="1">
    <location>
        <begin position="176"/>
        <end position="196"/>
    </location>
</feature>
<feature type="transmembrane region" description="Helical" evidence="1">
    <location>
        <begin position="204"/>
        <end position="224"/>
    </location>
</feature>
<feature type="transmembrane region" description="Helical" evidence="1">
    <location>
        <begin position="259"/>
        <end position="279"/>
    </location>
</feature>
<feature type="transmembrane region" description="Helical" evidence="1">
    <location>
        <begin position="290"/>
        <end position="310"/>
    </location>
</feature>
<feature type="transmembrane region" description="Helical" evidence="1">
    <location>
        <begin position="312"/>
        <end position="332"/>
    </location>
</feature>
<feature type="transmembrane region" description="Helical" evidence="1">
    <location>
        <begin position="342"/>
        <end position="362"/>
    </location>
</feature>
<feature type="transmembrane region" description="Helical" evidence="1">
    <location>
        <begin position="377"/>
        <end position="397"/>
    </location>
</feature>
<feature type="transmembrane region" description="Helical" evidence="1">
    <location>
        <begin position="402"/>
        <end position="422"/>
    </location>
</feature>
<accession>Q3KCB9</accession>
<organism>
    <name type="scientific">Pseudomonas fluorescens (strain Pf0-1)</name>
    <dbReference type="NCBI Taxonomy" id="205922"/>
    <lineage>
        <taxon>Bacteria</taxon>
        <taxon>Pseudomonadati</taxon>
        <taxon>Pseudomonadota</taxon>
        <taxon>Gammaproteobacteria</taxon>
        <taxon>Pseudomonadales</taxon>
        <taxon>Pseudomonadaceae</taxon>
        <taxon>Pseudomonas</taxon>
    </lineage>
</organism>
<proteinExistence type="inferred from homology"/>
<protein>
    <recommendedName>
        <fullName evidence="1">Undecaprenyl phosphate-alpha-4-amino-4-deoxy-L-arabinose arabinosyl transferase 2</fullName>
        <ecNumber evidence="1">2.4.2.43</ecNumber>
    </recommendedName>
    <alternativeName>
        <fullName evidence="1">4-amino-4-deoxy-L-arabinose lipid A transferase 2</fullName>
    </alternativeName>
    <alternativeName>
        <fullName evidence="1">Lipid IV(A) 4-amino-4-deoxy-L-arabinosyltransferase</fullName>
    </alternativeName>
    <alternativeName>
        <fullName evidence="1">Undecaprenyl phosphate-alpha-L-Ara4N transferase 2</fullName>
    </alternativeName>
</protein>
<name>ARNT2_PSEPF</name>
<comment type="function">
    <text evidence="1">Catalyzes the transfer of the L-Ara4N moiety of the glycolipid undecaprenyl phosphate-alpha-L-Ara4N to lipid A. The modified arabinose is attached to lipid A and is required for resistance to polymyxin and cationic antimicrobial peptides.</text>
</comment>
<comment type="catalytic activity">
    <reaction evidence="1">
        <text>4-amino-4-deoxy-alpha-L-arabinopyranosyl di-trans,octa-cis-undecaprenyl phosphate + lipid IVA = lipid IIA + di-trans,octa-cis-undecaprenyl phosphate.</text>
        <dbReference type="EC" id="2.4.2.43"/>
    </reaction>
</comment>
<comment type="pathway">
    <text evidence="1">Lipopolysaccharide metabolism; 4-amino-4-deoxy-beta-L-arabinose-lipid A biosynthesis.</text>
</comment>
<comment type="subcellular location">
    <subcellularLocation>
        <location evidence="1">Cell inner membrane</location>
        <topology evidence="1">Multi-pass membrane protein</topology>
    </subcellularLocation>
</comment>
<comment type="similarity">
    <text evidence="1">Belongs to the glycosyltransferase 83 family.</text>
</comment>
<gene>
    <name evidence="1" type="primary">arnT2</name>
    <name type="ordered locus">Pfl01_2845</name>
</gene>
<keyword id="KW-0997">Cell inner membrane</keyword>
<keyword id="KW-1003">Cell membrane</keyword>
<keyword id="KW-0328">Glycosyltransferase</keyword>
<keyword id="KW-0441">Lipid A biosynthesis</keyword>
<keyword id="KW-0444">Lipid biosynthesis</keyword>
<keyword id="KW-0443">Lipid metabolism</keyword>
<keyword id="KW-0448">Lipopolysaccharide biosynthesis</keyword>
<keyword id="KW-0472">Membrane</keyword>
<keyword id="KW-0808">Transferase</keyword>
<keyword id="KW-0812">Transmembrane</keyword>
<keyword id="KW-1133">Transmembrane helix</keyword>
<evidence type="ECO:0000255" key="1">
    <source>
        <dbReference type="HAMAP-Rule" id="MF_01165"/>
    </source>
</evidence>
<dbReference type="EC" id="2.4.2.43" evidence="1"/>
<dbReference type="EMBL" id="CP000094">
    <property type="protein sequence ID" value="ABA74586.1"/>
    <property type="molecule type" value="Genomic_DNA"/>
</dbReference>
<dbReference type="RefSeq" id="WP_011334257.1">
    <property type="nucleotide sequence ID" value="NC_007492.2"/>
</dbReference>
<dbReference type="SMR" id="Q3KCB9"/>
<dbReference type="CAZy" id="GT83">
    <property type="family name" value="Glycosyltransferase Family 83"/>
</dbReference>
<dbReference type="KEGG" id="pfo:Pfl01_2845"/>
<dbReference type="eggNOG" id="COG1807">
    <property type="taxonomic scope" value="Bacteria"/>
</dbReference>
<dbReference type="HOGENOM" id="CLU_019200_2_1_6"/>
<dbReference type="UniPathway" id="UPA00037"/>
<dbReference type="Proteomes" id="UP000002704">
    <property type="component" value="Chromosome"/>
</dbReference>
<dbReference type="GO" id="GO:0005886">
    <property type="term" value="C:plasma membrane"/>
    <property type="evidence" value="ECO:0007669"/>
    <property type="project" value="UniProtKB-SubCell"/>
</dbReference>
<dbReference type="GO" id="GO:0103015">
    <property type="term" value="F:4-amino-4-deoxy-L-arabinose transferase activity"/>
    <property type="evidence" value="ECO:0007669"/>
    <property type="project" value="UniProtKB-EC"/>
</dbReference>
<dbReference type="GO" id="GO:0000030">
    <property type="term" value="F:mannosyltransferase activity"/>
    <property type="evidence" value="ECO:0007669"/>
    <property type="project" value="InterPro"/>
</dbReference>
<dbReference type="GO" id="GO:0009245">
    <property type="term" value="P:lipid A biosynthetic process"/>
    <property type="evidence" value="ECO:0007669"/>
    <property type="project" value="UniProtKB-UniRule"/>
</dbReference>
<dbReference type="GO" id="GO:0009103">
    <property type="term" value="P:lipopolysaccharide biosynthetic process"/>
    <property type="evidence" value="ECO:0007669"/>
    <property type="project" value="UniProtKB-KW"/>
</dbReference>
<dbReference type="GO" id="GO:0006493">
    <property type="term" value="P:protein O-linked glycosylation"/>
    <property type="evidence" value="ECO:0007669"/>
    <property type="project" value="InterPro"/>
</dbReference>
<dbReference type="GO" id="GO:0010041">
    <property type="term" value="P:response to iron(III) ion"/>
    <property type="evidence" value="ECO:0007669"/>
    <property type="project" value="TreeGrafter"/>
</dbReference>
<dbReference type="HAMAP" id="MF_01165">
    <property type="entry name" value="ArnT_transfer"/>
    <property type="match status" value="1"/>
</dbReference>
<dbReference type="InterPro" id="IPR022839">
    <property type="entry name" value="ArnT_tfrase"/>
</dbReference>
<dbReference type="InterPro" id="IPR003342">
    <property type="entry name" value="Glyco_trans_39/83"/>
</dbReference>
<dbReference type="InterPro" id="IPR050297">
    <property type="entry name" value="LipidA_mod_glycosyltrf_83"/>
</dbReference>
<dbReference type="NCBIfam" id="NF009784">
    <property type="entry name" value="PRK13279.1"/>
    <property type="match status" value="1"/>
</dbReference>
<dbReference type="PANTHER" id="PTHR33908">
    <property type="entry name" value="MANNOSYLTRANSFERASE YKCB-RELATED"/>
    <property type="match status" value="1"/>
</dbReference>
<dbReference type="PANTHER" id="PTHR33908:SF3">
    <property type="entry name" value="UNDECAPRENYL PHOSPHATE-ALPHA-4-AMINO-4-DEOXY-L-ARABINOSE ARABINOSYL TRANSFERASE"/>
    <property type="match status" value="1"/>
</dbReference>
<dbReference type="Pfam" id="PF02366">
    <property type="entry name" value="PMT"/>
    <property type="match status" value="1"/>
</dbReference>
<sequence>MSKRWALPLLLGIFLLAYLLPLGSHGLWIPDETRYAQISQEMLLSGNWVSPHFMNLRYFEKPAAGYWMIAIGQAVFGQNLFGVRFASALSTGLSVLLCFLIARRLWNEPRKSFVCALLYMSFVIVAGQAGYANLDPQFTFWVNLSLVALWFALDSRANGQRLAGWAVLGLACGMGFMTKGFLAWLLPVLIALPWMLWQKRWKELLLYGPVAIAVAIIVSLPWALAVHGQEPDYWRFFFWHEHIRRFAGDDAQHDAPWWFYLPLLVAFSLPWVGMLPVAFKQAWQTRRETGIAFLGLWLLMPLLFFSLSNGKLPTYILPCLLPLALLLGHALADRLRLEQGRALGLNGLLNLLLGLVTLIGLVYVQLKRPLYDHELHSLVLVFIALTGWIISNLLQAFRPLQCWAAPAVGSLLLIALLPAALPRSVVANKMPDQFVLAHQKELTATTHLLSNDLGAASALSWRVKRPQVALYNTIGELKYGLAYPDGIQQRVDPDQVQQWMREARKTGSVGVVMRVKGQDELDELDRLPKDGVRYEQGNLVIMILPQEAS</sequence>